<organism>
    <name type="scientific">Acidobacterium capsulatum (strain ATCC 51196 / DSM 11244 / BCRC 80197 / JCM 7670 / NBRC 15755 / NCIMB 13165 / 161)</name>
    <dbReference type="NCBI Taxonomy" id="240015"/>
    <lineage>
        <taxon>Bacteria</taxon>
        <taxon>Pseudomonadati</taxon>
        <taxon>Acidobacteriota</taxon>
        <taxon>Terriglobia</taxon>
        <taxon>Terriglobales</taxon>
        <taxon>Acidobacteriaceae</taxon>
        <taxon>Acidobacterium</taxon>
    </lineage>
</organism>
<protein>
    <recommendedName>
        <fullName evidence="1">Small ribosomal subunit protein uS7</fullName>
    </recommendedName>
    <alternativeName>
        <fullName evidence="2">30S ribosomal protein S7</fullName>
    </alternativeName>
</protein>
<keyword id="KW-1185">Reference proteome</keyword>
<keyword id="KW-0687">Ribonucleoprotein</keyword>
<keyword id="KW-0689">Ribosomal protein</keyword>
<keyword id="KW-0694">RNA-binding</keyword>
<keyword id="KW-0699">rRNA-binding</keyword>
<keyword id="KW-0820">tRNA-binding</keyword>
<gene>
    <name evidence="1" type="primary">rpsG</name>
    <name type="ordered locus">ACP_1455</name>
</gene>
<evidence type="ECO:0000255" key="1">
    <source>
        <dbReference type="HAMAP-Rule" id="MF_00480"/>
    </source>
</evidence>
<evidence type="ECO:0000305" key="2"/>
<dbReference type="EMBL" id="CP001472">
    <property type="protein sequence ID" value="ACO33624.1"/>
    <property type="molecule type" value="Genomic_DNA"/>
</dbReference>
<dbReference type="RefSeq" id="WP_015896588.1">
    <property type="nucleotide sequence ID" value="NC_012483.1"/>
</dbReference>
<dbReference type="SMR" id="C1F646"/>
<dbReference type="FunCoup" id="C1F646">
    <property type="interactions" value="634"/>
</dbReference>
<dbReference type="STRING" id="240015.ACP_1455"/>
<dbReference type="KEGG" id="aca:ACP_1455"/>
<dbReference type="eggNOG" id="COG0049">
    <property type="taxonomic scope" value="Bacteria"/>
</dbReference>
<dbReference type="HOGENOM" id="CLU_072226_1_1_0"/>
<dbReference type="InParanoid" id="C1F646"/>
<dbReference type="OrthoDB" id="9807653at2"/>
<dbReference type="Proteomes" id="UP000002207">
    <property type="component" value="Chromosome"/>
</dbReference>
<dbReference type="GO" id="GO:0015935">
    <property type="term" value="C:small ribosomal subunit"/>
    <property type="evidence" value="ECO:0007669"/>
    <property type="project" value="InterPro"/>
</dbReference>
<dbReference type="GO" id="GO:0019843">
    <property type="term" value="F:rRNA binding"/>
    <property type="evidence" value="ECO:0007669"/>
    <property type="project" value="UniProtKB-UniRule"/>
</dbReference>
<dbReference type="GO" id="GO:0003735">
    <property type="term" value="F:structural constituent of ribosome"/>
    <property type="evidence" value="ECO:0007669"/>
    <property type="project" value="InterPro"/>
</dbReference>
<dbReference type="GO" id="GO:0000049">
    <property type="term" value="F:tRNA binding"/>
    <property type="evidence" value="ECO:0007669"/>
    <property type="project" value="UniProtKB-UniRule"/>
</dbReference>
<dbReference type="GO" id="GO:0006412">
    <property type="term" value="P:translation"/>
    <property type="evidence" value="ECO:0007669"/>
    <property type="project" value="UniProtKB-UniRule"/>
</dbReference>
<dbReference type="CDD" id="cd14869">
    <property type="entry name" value="uS7_Bacteria"/>
    <property type="match status" value="1"/>
</dbReference>
<dbReference type="FunFam" id="1.10.455.10:FF:000001">
    <property type="entry name" value="30S ribosomal protein S7"/>
    <property type="match status" value="1"/>
</dbReference>
<dbReference type="Gene3D" id="1.10.455.10">
    <property type="entry name" value="Ribosomal protein S7 domain"/>
    <property type="match status" value="1"/>
</dbReference>
<dbReference type="HAMAP" id="MF_00480_B">
    <property type="entry name" value="Ribosomal_uS7_B"/>
    <property type="match status" value="1"/>
</dbReference>
<dbReference type="InterPro" id="IPR000235">
    <property type="entry name" value="Ribosomal_uS7"/>
</dbReference>
<dbReference type="InterPro" id="IPR005717">
    <property type="entry name" value="Ribosomal_uS7_bac/org-type"/>
</dbReference>
<dbReference type="InterPro" id="IPR020606">
    <property type="entry name" value="Ribosomal_uS7_CS"/>
</dbReference>
<dbReference type="InterPro" id="IPR023798">
    <property type="entry name" value="Ribosomal_uS7_dom"/>
</dbReference>
<dbReference type="InterPro" id="IPR036823">
    <property type="entry name" value="Ribosomal_uS7_dom_sf"/>
</dbReference>
<dbReference type="NCBIfam" id="TIGR01029">
    <property type="entry name" value="rpsG_bact"/>
    <property type="match status" value="1"/>
</dbReference>
<dbReference type="PANTHER" id="PTHR11205">
    <property type="entry name" value="RIBOSOMAL PROTEIN S7"/>
    <property type="match status" value="1"/>
</dbReference>
<dbReference type="Pfam" id="PF00177">
    <property type="entry name" value="Ribosomal_S7"/>
    <property type="match status" value="1"/>
</dbReference>
<dbReference type="PIRSF" id="PIRSF002122">
    <property type="entry name" value="RPS7p_RPS7a_RPS5e_RPS7o"/>
    <property type="match status" value="1"/>
</dbReference>
<dbReference type="SUPFAM" id="SSF47973">
    <property type="entry name" value="Ribosomal protein S7"/>
    <property type="match status" value="1"/>
</dbReference>
<dbReference type="PROSITE" id="PS00052">
    <property type="entry name" value="RIBOSOMAL_S7"/>
    <property type="match status" value="1"/>
</dbReference>
<accession>C1F646</accession>
<proteinExistence type="inferred from homology"/>
<name>RS7_ACIC5</name>
<feature type="chain" id="PRO_1000135570" description="Small ribosomal subunit protein uS7">
    <location>
        <begin position="1"/>
        <end position="156"/>
    </location>
</feature>
<sequence length="156" mass="17481">MPRKGHIAKREVAPDPVYGSTLVTKFVNSMMWGGKKSTAQGIFYSAMTNLEQKGGDEAIKLFKKAVENCKPLLEVKTRRVGGANYQVPVEVNPERRTSLAIRWLVSYGRARGEKGMIEKLTNELLDAANGRGAAMKKKEDVHRMAEANKAFAHYRW</sequence>
<comment type="function">
    <text evidence="1">One of the primary rRNA binding proteins, it binds directly to 16S rRNA where it nucleates assembly of the head domain of the 30S subunit. Is located at the subunit interface close to the decoding center, probably blocks exit of the E-site tRNA.</text>
</comment>
<comment type="subunit">
    <text evidence="1">Part of the 30S ribosomal subunit. Contacts proteins S9 and S11.</text>
</comment>
<comment type="similarity">
    <text evidence="1">Belongs to the universal ribosomal protein uS7 family.</text>
</comment>
<reference key="1">
    <citation type="journal article" date="2009" name="Appl. Environ. Microbiol.">
        <title>Three genomes from the phylum Acidobacteria provide insight into the lifestyles of these microorganisms in soils.</title>
        <authorList>
            <person name="Ward N.L."/>
            <person name="Challacombe J.F."/>
            <person name="Janssen P.H."/>
            <person name="Henrissat B."/>
            <person name="Coutinho P.M."/>
            <person name="Wu M."/>
            <person name="Xie G."/>
            <person name="Haft D.H."/>
            <person name="Sait M."/>
            <person name="Badger J."/>
            <person name="Barabote R.D."/>
            <person name="Bradley B."/>
            <person name="Brettin T.S."/>
            <person name="Brinkac L.M."/>
            <person name="Bruce D."/>
            <person name="Creasy T."/>
            <person name="Daugherty S.C."/>
            <person name="Davidsen T.M."/>
            <person name="DeBoy R.T."/>
            <person name="Detter J.C."/>
            <person name="Dodson R.J."/>
            <person name="Durkin A.S."/>
            <person name="Ganapathy A."/>
            <person name="Gwinn-Giglio M."/>
            <person name="Han C.S."/>
            <person name="Khouri H."/>
            <person name="Kiss H."/>
            <person name="Kothari S.P."/>
            <person name="Madupu R."/>
            <person name="Nelson K.E."/>
            <person name="Nelson W.C."/>
            <person name="Paulsen I."/>
            <person name="Penn K."/>
            <person name="Ren Q."/>
            <person name="Rosovitz M.J."/>
            <person name="Selengut J.D."/>
            <person name="Shrivastava S."/>
            <person name="Sullivan S.A."/>
            <person name="Tapia R."/>
            <person name="Thompson L.S."/>
            <person name="Watkins K.L."/>
            <person name="Yang Q."/>
            <person name="Yu C."/>
            <person name="Zafar N."/>
            <person name="Zhou L."/>
            <person name="Kuske C.R."/>
        </authorList>
    </citation>
    <scope>NUCLEOTIDE SEQUENCE [LARGE SCALE GENOMIC DNA]</scope>
    <source>
        <strain>ATCC 51196 / DSM 11244 / BCRC 80197 / JCM 7670 / NBRC 15755 / NCIMB 13165 / 161</strain>
    </source>
</reference>